<dbReference type="EMBL" id="K02194">
    <property type="protein sequence ID" value="AAA29524.1"/>
    <property type="molecule type" value="Genomic_DNA"/>
</dbReference>
<dbReference type="PIR" id="A03388">
    <property type="entry name" value="OZZQAF"/>
</dbReference>
<dbReference type="PDB" id="2MSA">
    <property type="method" value="NMR"/>
    <property type="chains" value="A=67-75"/>
</dbReference>
<dbReference type="PDB" id="5BK0">
    <property type="method" value="X-ray"/>
    <property type="resolution" value="3.15 A"/>
    <property type="chains" value="E=268-287"/>
</dbReference>
<dbReference type="PDB" id="6AXK">
    <property type="method" value="X-ray"/>
    <property type="resolution" value="2.10 A"/>
    <property type="chains" value="E=274-285"/>
</dbReference>
<dbReference type="PDB" id="6AXL">
    <property type="method" value="X-ray"/>
    <property type="resolution" value="2.40 A"/>
    <property type="chains" value="G/I=274-285"/>
</dbReference>
<dbReference type="PDB" id="6AZM">
    <property type="method" value="X-ray"/>
    <property type="resolution" value="1.60 A"/>
    <property type="chains" value="E/F=268-287"/>
</dbReference>
<dbReference type="PDB" id="6B5L">
    <property type="method" value="X-ray"/>
    <property type="resolution" value="2.40 A"/>
    <property type="chains" value="A=120-130"/>
</dbReference>
<dbReference type="PDB" id="6B5M">
    <property type="method" value="X-ray"/>
    <property type="resolution" value="1.79 A"/>
    <property type="chains" value="A=120-134"/>
</dbReference>
<dbReference type="PDB" id="6B5N">
    <property type="method" value="X-ray"/>
    <property type="resolution" value="1.98 A"/>
    <property type="chains" value="A=136-150"/>
</dbReference>
<dbReference type="PDB" id="6B5O">
    <property type="method" value="X-ray"/>
    <property type="resolution" value="2.19 A"/>
    <property type="chains" value="A=272-286"/>
</dbReference>
<dbReference type="PDB" id="6B5P">
    <property type="method" value="X-ray"/>
    <property type="resolution" value="2.30 A"/>
    <property type="chains" value="A=120-130"/>
</dbReference>
<dbReference type="PDB" id="6B5R">
    <property type="method" value="X-ray"/>
    <property type="resolution" value="1.77 A"/>
    <property type="chains" value="A=120-134"/>
</dbReference>
<dbReference type="PDB" id="6B5S">
    <property type="method" value="X-ray"/>
    <property type="resolution" value="1.98 A"/>
    <property type="chains" value="A=136-150"/>
</dbReference>
<dbReference type="PDB" id="6B5T">
    <property type="method" value="X-ray"/>
    <property type="resolution" value="2.22 A"/>
    <property type="chains" value="A=272-286"/>
</dbReference>
<dbReference type="PDB" id="6D01">
    <property type="method" value="X-ray"/>
    <property type="resolution" value="3.20 A"/>
    <property type="chains" value="I/J=268-287"/>
</dbReference>
<dbReference type="PDB" id="6D0X">
    <property type="method" value="X-ray"/>
    <property type="resolution" value="1.85 A"/>
    <property type="chains" value="C=276-287"/>
</dbReference>
<dbReference type="PDB" id="6D11">
    <property type="method" value="X-ray"/>
    <property type="resolution" value="3.40 A"/>
    <property type="chains" value="E=268-287"/>
</dbReference>
<dbReference type="PDB" id="6UC5">
    <property type="method" value="X-ray"/>
    <property type="resolution" value="1.75 A"/>
    <property type="chains" value="P=278-288"/>
</dbReference>
<dbReference type="PDB" id="6UUD">
    <property type="method" value="X-ray"/>
    <property type="resolution" value="1.85 A"/>
    <property type="chains" value="A=100-116"/>
</dbReference>
<dbReference type="PDB" id="6W00">
    <property type="method" value="X-ray"/>
    <property type="resolution" value="1.85 A"/>
    <property type="chains" value="P=278-285"/>
</dbReference>
<dbReference type="PDB" id="6W05">
    <property type="method" value="X-ray"/>
    <property type="resolution" value="2.52 A"/>
    <property type="chains" value="P=278-285"/>
</dbReference>
<dbReference type="PDB" id="6WFW">
    <property type="method" value="X-ray"/>
    <property type="resolution" value="2.09 A"/>
    <property type="chains" value="P=278-285"/>
</dbReference>
<dbReference type="PDB" id="6WFX">
    <property type="method" value="X-ray"/>
    <property type="resolution" value="2.59 A"/>
    <property type="chains" value="P=278-285"/>
</dbReference>
<dbReference type="PDB" id="6WFY">
    <property type="method" value="X-ray"/>
    <property type="resolution" value="1.23 A"/>
    <property type="chains" value="P=270-285"/>
</dbReference>
<dbReference type="PDB" id="6WFZ">
    <property type="method" value="X-ray"/>
    <property type="resolution" value="1.84 A"/>
    <property type="chains" value="C/P=274-285"/>
</dbReference>
<dbReference type="PDB" id="6WG0">
    <property type="method" value="X-ray"/>
    <property type="resolution" value="1.60 A"/>
    <property type="chains" value="P=278-288"/>
</dbReference>
<dbReference type="PDB" id="6WG1">
    <property type="method" value="X-ray"/>
    <property type="resolution" value="2.09 A"/>
    <property type="chains" value="C=262-285"/>
</dbReference>
<dbReference type="PDB" id="6WG2">
    <property type="method" value="X-ray"/>
    <property type="resolution" value="2.53 A"/>
    <property type="chains" value="P=270-285"/>
</dbReference>
<dbReference type="PDB" id="7LKB">
    <property type="method" value="X-ray"/>
    <property type="resolution" value="1.80 A"/>
    <property type="chains" value="A/D=120-134"/>
</dbReference>
<dbReference type="PDB" id="7LKG">
    <property type="method" value="X-ray"/>
    <property type="resolution" value="2.02 A"/>
    <property type="chains" value="C/F=120-134"/>
</dbReference>
<dbReference type="PDB" id="7RAJ">
    <property type="method" value="X-ray"/>
    <property type="resolution" value="3.00 A"/>
    <property type="chains" value="A=120-134"/>
</dbReference>
<dbReference type="PDB" id="7RCS">
    <property type="method" value="X-ray"/>
    <property type="resolution" value="2.40 A"/>
    <property type="chains" value="C/D=120-134"/>
</dbReference>
<dbReference type="PDB" id="7RD3">
    <property type="method" value="X-ray"/>
    <property type="resolution" value="1.81 A"/>
    <property type="chains" value="C/D=120-134"/>
</dbReference>
<dbReference type="PDB" id="7RD4">
    <property type="method" value="X-ray"/>
    <property type="resolution" value="1.75 A"/>
    <property type="chains" value="G/I=120-134"/>
</dbReference>
<dbReference type="PDB" id="7RD9">
    <property type="method" value="X-ray"/>
    <property type="resolution" value="1.91 A"/>
    <property type="chains" value="C=120-134"/>
</dbReference>
<dbReference type="PDB" id="7RDA">
    <property type="method" value="X-ray"/>
    <property type="resolution" value="1.92 A"/>
    <property type="chains" value="C=120-134"/>
</dbReference>
<dbReference type="PDB" id="7UFQ">
    <property type="method" value="X-ray"/>
    <property type="resolution" value="2.30 A"/>
    <property type="chains" value="A/C=120-134"/>
</dbReference>
<dbReference type="PDB" id="7UYM">
    <property type="method" value="X-ray"/>
    <property type="resolution" value="2.20 A"/>
    <property type="chains" value="P=276-287"/>
</dbReference>
<dbReference type="PDB" id="8F9F">
    <property type="method" value="X-ray"/>
    <property type="resolution" value="2.20 A"/>
    <property type="chains" value="C/P=276-287"/>
</dbReference>
<dbReference type="PDB" id="8FAS">
    <property type="method" value="X-ray"/>
    <property type="resolution" value="1.55 A"/>
    <property type="chains" value="C=268-287"/>
</dbReference>
<dbReference type="PDBsum" id="2MSA"/>
<dbReference type="PDBsum" id="5BK0"/>
<dbReference type="PDBsum" id="6AXK"/>
<dbReference type="PDBsum" id="6AXL"/>
<dbReference type="PDBsum" id="6AZM"/>
<dbReference type="PDBsum" id="6B5L"/>
<dbReference type="PDBsum" id="6B5M"/>
<dbReference type="PDBsum" id="6B5N"/>
<dbReference type="PDBsum" id="6B5O"/>
<dbReference type="PDBsum" id="6B5P"/>
<dbReference type="PDBsum" id="6B5R"/>
<dbReference type="PDBsum" id="6B5S"/>
<dbReference type="PDBsum" id="6B5T"/>
<dbReference type="PDBsum" id="6D01"/>
<dbReference type="PDBsum" id="6D0X"/>
<dbReference type="PDBsum" id="6D11"/>
<dbReference type="PDBsum" id="6UC5"/>
<dbReference type="PDBsum" id="6UUD"/>
<dbReference type="PDBsum" id="6W00"/>
<dbReference type="PDBsum" id="6W05"/>
<dbReference type="PDBsum" id="6WFW"/>
<dbReference type="PDBsum" id="6WFX"/>
<dbReference type="PDBsum" id="6WFY"/>
<dbReference type="PDBsum" id="6WFZ"/>
<dbReference type="PDBsum" id="6WG0"/>
<dbReference type="PDBsum" id="6WG1"/>
<dbReference type="PDBsum" id="6WG2"/>
<dbReference type="PDBsum" id="7LKB"/>
<dbReference type="PDBsum" id="7LKG"/>
<dbReference type="PDBsum" id="7RAJ"/>
<dbReference type="PDBsum" id="7RCS"/>
<dbReference type="PDBsum" id="7RD3"/>
<dbReference type="PDBsum" id="7RD4"/>
<dbReference type="PDBsum" id="7RD9"/>
<dbReference type="PDBsum" id="7RDA"/>
<dbReference type="PDBsum" id="7UFQ"/>
<dbReference type="PDBsum" id="7UYM"/>
<dbReference type="PDBsum" id="8F9F"/>
<dbReference type="PDBsum" id="8FAS"/>
<dbReference type="EMDB" id="EMD-27194"/>
<dbReference type="EMDB" id="EMD-27195"/>
<dbReference type="EMDB" id="EMD-27202"/>
<dbReference type="EMDB" id="EMD-27222"/>
<dbReference type="EMDB" id="EMD-9065"/>
<dbReference type="SMR" id="P02893"/>
<dbReference type="GlyCosmos" id="P02893">
    <property type="glycosylation" value="1 site, No reported glycans"/>
</dbReference>
<dbReference type="ABCD" id="P02893">
    <property type="antibodies" value="221 sequenced antibodies"/>
</dbReference>
<dbReference type="VEuPathDB" id="PlasmoDB:PF3D7_0304600"/>
<dbReference type="VEuPathDB" id="PlasmoDB:Pf7G8-2_000074100"/>
<dbReference type="VEuPathDB" id="PlasmoDB:Pf7G8_030010400"/>
<dbReference type="VEuPathDB" id="PlasmoDB:PfCD01_030010000"/>
<dbReference type="VEuPathDB" id="PlasmoDB:PfDd2_030009600"/>
<dbReference type="VEuPathDB" id="PlasmoDB:PfGA01_030011200"/>
<dbReference type="VEuPathDB" id="PlasmoDB:PfGB4_030010200"/>
<dbReference type="VEuPathDB" id="PlasmoDB:PfGN01_030010200"/>
<dbReference type="VEuPathDB" id="PlasmoDB:PfHB3_030008400"/>
<dbReference type="VEuPathDB" id="PlasmoDB:PfIT_030009400"/>
<dbReference type="VEuPathDB" id="PlasmoDB:PfKE01_030009000"/>
<dbReference type="VEuPathDB" id="PlasmoDB:PfKH01_030009500"/>
<dbReference type="VEuPathDB" id="PlasmoDB:PfKH02_030010100"/>
<dbReference type="VEuPathDB" id="PlasmoDB:PfML01_030009600"/>
<dbReference type="VEuPathDB" id="PlasmoDB:PfNF135_030009700"/>
<dbReference type="VEuPathDB" id="PlasmoDB:PfNF166_030008000"/>
<dbReference type="VEuPathDB" id="PlasmoDB:PfNF54_030009700"/>
<dbReference type="VEuPathDB" id="PlasmoDB:PfSD01_030009700"/>
<dbReference type="VEuPathDB" id="PlasmoDB:PfSN01_030010300"/>
<dbReference type="VEuPathDB" id="PlasmoDB:PfTG01_030011000"/>
<dbReference type="EvolutionaryTrace" id="P02893"/>
<dbReference type="GO" id="GO:0009986">
    <property type="term" value="C:cell surface"/>
    <property type="evidence" value="ECO:0007669"/>
    <property type="project" value="InterPro"/>
</dbReference>
<dbReference type="GO" id="GO:0005737">
    <property type="term" value="C:cytoplasm"/>
    <property type="evidence" value="ECO:0007669"/>
    <property type="project" value="UniProtKB-SubCell"/>
</dbReference>
<dbReference type="GO" id="GO:0005886">
    <property type="term" value="C:plasma membrane"/>
    <property type="evidence" value="ECO:0007669"/>
    <property type="project" value="UniProtKB-SubCell"/>
</dbReference>
<dbReference type="GO" id="GO:0098552">
    <property type="term" value="C:side of membrane"/>
    <property type="evidence" value="ECO:0007669"/>
    <property type="project" value="UniProtKB-KW"/>
</dbReference>
<dbReference type="GO" id="GO:0085017">
    <property type="term" value="P:entry into host cell by a symbiont-containing vacuole"/>
    <property type="evidence" value="ECO:0000315"/>
    <property type="project" value="UniProtKB"/>
</dbReference>
<dbReference type="Gene3D" id="2.20.100.10">
    <property type="entry name" value="Thrombospondin type-1 (TSP1) repeat"/>
    <property type="match status" value="1"/>
</dbReference>
<dbReference type="InterPro" id="IPR003067">
    <property type="entry name" value="Crcmsprzoite"/>
</dbReference>
<dbReference type="InterPro" id="IPR051860">
    <property type="entry name" value="Plasmodium_CSP_Invasion"/>
</dbReference>
<dbReference type="InterPro" id="IPR000884">
    <property type="entry name" value="TSP1_rpt"/>
</dbReference>
<dbReference type="InterPro" id="IPR036383">
    <property type="entry name" value="TSP1_rpt_sf"/>
</dbReference>
<dbReference type="PANTHER" id="PTHR44826">
    <property type="entry name" value="SPORE COAT PROTEIN SP85"/>
    <property type="match status" value="1"/>
</dbReference>
<dbReference type="PANTHER" id="PTHR44826:SF3">
    <property type="entry name" value="SPORE COAT PROTEIN SP85"/>
    <property type="match status" value="1"/>
</dbReference>
<dbReference type="Pfam" id="PF00090">
    <property type="entry name" value="TSP_1"/>
    <property type="match status" value="1"/>
</dbReference>
<dbReference type="PRINTS" id="PR01303">
    <property type="entry name" value="CRCMSPRZOITE"/>
</dbReference>
<dbReference type="SMART" id="SM00209">
    <property type="entry name" value="TSP1"/>
    <property type="match status" value="1"/>
</dbReference>
<dbReference type="SUPFAM" id="SSF82895">
    <property type="entry name" value="TSP-1 type 1 repeat"/>
    <property type="match status" value="1"/>
</dbReference>
<dbReference type="PROSITE" id="PS50092">
    <property type="entry name" value="TSP1"/>
    <property type="match status" value="1"/>
</dbReference>
<accession>P02893</accession>
<evidence type="ECO:0000250" key="1">
    <source>
        <dbReference type="UniProtKB" id="P19597"/>
    </source>
</evidence>
<evidence type="ECO:0000250" key="2">
    <source>
        <dbReference type="UniProtKB" id="P23093"/>
    </source>
</evidence>
<evidence type="ECO:0000250" key="3">
    <source>
        <dbReference type="UniProtKB" id="Q7K740"/>
    </source>
</evidence>
<evidence type="ECO:0000255" key="4"/>
<evidence type="ECO:0000255" key="5">
    <source>
        <dbReference type="PROSITE-ProRule" id="PRU00210"/>
    </source>
</evidence>
<evidence type="ECO:0000256" key="6">
    <source>
        <dbReference type="SAM" id="MobiDB-lite"/>
    </source>
</evidence>
<evidence type="ECO:0000269" key="7">
    <source>
    </source>
</evidence>
<evidence type="ECO:0000269" key="8">
    <source>
    </source>
</evidence>
<evidence type="ECO:0000269" key="9">
    <source>
    </source>
</evidence>
<evidence type="ECO:0000269" key="10">
    <source>
    </source>
</evidence>
<evidence type="ECO:0000269" key="11">
    <source>
    </source>
</evidence>
<evidence type="ECO:0000303" key="12">
    <source>
    </source>
</evidence>
<evidence type="ECO:0000303" key="13">
    <source>
    </source>
</evidence>
<evidence type="ECO:0000303" key="14">
    <source>
    </source>
</evidence>
<evidence type="ECO:0000305" key="15"/>
<evidence type="ECO:0000305" key="16">
    <source>
    </source>
</evidence>
<evidence type="ECO:0007744" key="17">
    <source>
        <dbReference type="PDB" id="2MSA"/>
    </source>
</evidence>
<evidence type="ECO:0007744" key="18">
    <source>
        <dbReference type="PDB" id="5BK0"/>
    </source>
</evidence>
<evidence type="ECO:0007744" key="19">
    <source>
        <dbReference type="PDB" id="6AZM"/>
    </source>
</evidence>
<evidence type="ECO:0007744" key="20">
    <source>
        <dbReference type="PDB" id="6B5L"/>
    </source>
</evidence>
<evidence type="ECO:0007744" key="21">
    <source>
        <dbReference type="PDB" id="6B5M"/>
    </source>
</evidence>
<evidence type="ECO:0007744" key="22">
    <source>
        <dbReference type="PDB" id="6B5N"/>
    </source>
</evidence>
<evidence type="ECO:0007744" key="23">
    <source>
        <dbReference type="PDB" id="6B5O"/>
    </source>
</evidence>
<evidence type="ECO:0007744" key="24">
    <source>
        <dbReference type="PDB" id="6B5P"/>
    </source>
</evidence>
<evidence type="ECO:0007744" key="25">
    <source>
        <dbReference type="PDB" id="6B5R"/>
    </source>
</evidence>
<evidence type="ECO:0007744" key="26">
    <source>
        <dbReference type="PDB" id="6B5S"/>
    </source>
</evidence>
<evidence type="ECO:0007744" key="27">
    <source>
        <dbReference type="PDB" id="6B5T"/>
    </source>
</evidence>
<evidence type="ECO:0007829" key="28">
    <source>
        <dbReference type="PDB" id="6UUD"/>
    </source>
</evidence>
<evidence type="ECO:0007829" key="29">
    <source>
        <dbReference type="PDB" id="6WFY"/>
    </source>
</evidence>
<evidence type="ECO:0007829" key="30">
    <source>
        <dbReference type="PDB" id="6WG1"/>
    </source>
</evidence>
<organism>
    <name type="scientific">Plasmodium falciparum</name>
    <dbReference type="NCBI Taxonomy" id="5833"/>
    <lineage>
        <taxon>Eukaryota</taxon>
        <taxon>Sar</taxon>
        <taxon>Alveolata</taxon>
        <taxon>Apicomplexa</taxon>
        <taxon>Aconoidasida</taxon>
        <taxon>Haemosporida</taxon>
        <taxon>Plasmodiidae</taxon>
        <taxon>Plasmodium</taxon>
        <taxon>Plasmodium (Laverania)</taxon>
    </lineage>
</organism>
<gene>
    <name evidence="12" type="primary">CSP</name>
</gene>
<comment type="function">
    <text evidence="2 9 10">Essential sporozoite protein (PubMed:29195810, PubMed:29554083). In the mosquito vector, required for sporozoite development in the oocyst, migration through the vector hemolymph and entry into the vector salivary glands (By similarity). In the vertebrate host, required for sporozoite migration through the host dermis and infection of host hepatocytes (PubMed:29195810, PubMed:29554083). Binds to highly sulfated heparan sulfate proteoglycans (HSPGs) on the surface of host hepatocytes (By similarity).</text>
</comment>
<comment type="function">
    <molecule>Circumsporozoite protein C-terminus</molecule>
    <text evidence="2">In the vertebrate host, binds to highly sulfated heparan sulfate proteoglycans (HSPGs) on the surface of host hepatocytes and is required for sporozoite invasion of the host hepatocytes.</text>
</comment>
<comment type="subcellular location">
    <subcellularLocation>
        <location evidence="1">Cell membrane</location>
        <topology evidence="4">Lipid-anchor</topology>
        <topology evidence="4">GPI-anchor</topology>
    </subcellularLocation>
    <subcellularLocation>
        <location evidence="2">Cytoplasm</location>
    </subcellularLocation>
    <text evidence="2">Localizes to the cytoplasm and the cell membrane in oocysts at day 6 post infection and then gradually distributes over the entire cell surface of the sporoblast and the budding sporozoites.</text>
</comment>
<comment type="developmental stage">
    <text evidence="7 9 10 11">Expressed in sporozoites (at protein level).</text>
</comment>
<comment type="domain">
    <text evidence="2 3">The N-terminus is involved in the initial binding to heparan sulfate proteoglycans (HSPGs) on the surface of host hepatocytes (By similarity). The N-terminus masks the TSP type-1 (TSR) domain which maintains the sporozoites in a migratory state, enabling them to complete their journey to the salivary gland in the mosquito vector and then to the host liver. The unmasking of the TSP type-1 (TSR) domain when the sporozoite interacts with the host hepatocyte also protects sporozoites from host antibodies (By similarity).</text>
</comment>
<comment type="domain">
    <text evidence="2">The TSP type-1 (TSR) domain is required for sporozoite development and invasion. CSP has two conformational states, an adhesive conformation in which the TSP type-1 (TSR) domain is exposed and a nonadhesive conformation in which the TSR is masked by the N-terminus. TSR-exposed conformation occurs during sporozoite development in the oocyst in the mosquito vector and during host hepatocyte invasion. TSR-masked conformation occurs during sporozoite migration through the hemolymph to salivary glands in the mosquito vector and in the host dermis.</text>
</comment>
<comment type="domain">
    <text evidence="2">The GPI-anchor is essential for cell membrane localization and for sporozoite formation inside the oocyst.</text>
</comment>
<comment type="PTM">
    <text evidence="2 7 10">During host cell invasion, proteolytically cleaved at the cell membrane in the region I by a papain-like cysteine protease of parasite origin (PubMed:15630135, PubMed:29554083). Cleavage is triggered by the sporozoite contact with highly sulfated heparan sulfate proteoglycans (HSPGs) present on the host hepatocyte cell surface (By similarity). Cleavage exposes the TSP type-1 (TSR) domain and is required for productive invasion of host hepatocytes but not for adhesion to the host cell membrane (PubMed:15630135). Cleavage is dispensable for sporozoite development in the oocyst, motility and for traversal of host and vector cells (By similarity).</text>
</comment>
<comment type="PTM">
    <text evidence="1">O-glycosylated; maybe by POFUT2.</text>
</comment>
<comment type="polymorphism">
    <text evidence="1">The sequence of the repeats varies across Plasmodium species and strains.</text>
</comment>
<comment type="biotechnology">
    <text evidence="8 9 10">CSP immunodominant B-cell epitopes are primarily located in the central repeats (PubMed:29195810, PubMed:29554083). Antibodies against CSP and particularly against the central repeats can neutralize infection at the pre-liver stage and thus makes CSP an attractive candidate for the development of vaccines (PubMed:29195810, PubMed:29554083). CSP is the major component of the leading malaria vaccine RTS,S/AS01, which provides partial protection against malaria in young children (PubMed:25913272).</text>
</comment>
<comment type="similarity">
    <text evidence="15">Belongs to the plasmodium circumsporozoite protein family.</text>
</comment>
<keyword id="KW-0002">3D-structure</keyword>
<keyword id="KW-1003">Cell membrane</keyword>
<keyword id="KW-0963">Cytoplasm</keyword>
<keyword id="KW-1015">Disulfide bond</keyword>
<keyword id="KW-0325">Glycoprotein</keyword>
<keyword id="KW-0336">GPI-anchor</keyword>
<keyword id="KW-0449">Lipoprotein</keyword>
<keyword id="KW-0461">Malaria</keyword>
<keyword id="KW-0472">Membrane</keyword>
<keyword id="KW-0677">Repeat</keyword>
<keyword id="KW-0732">Signal</keyword>
<keyword id="KW-0748">Sporozoite</keyword>
<feature type="signal peptide" evidence="4">
    <location>
        <begin position="1"/>
        <end position="18"/>
    </location>
</feature>
<feature type="chain" id="PRO_0000024526" description="Circumsporozoite protein" evidence="4">
    <location>
        <begin position="19"/>
        <end position="389"/>
    </location>
</feature>
<feature type="chain" id="PRO_0000455485" description="Circumsporozoite protein C-terminus" evidence="2">
    <location>
        <begin status="unknown"/>
        <end position="389"/>
    </location>
</feature>
<feature type="propeptide" id="PRO_0000455486" description="Removed in mature form" evidence="4">
    <location>
        <begin position="390"/>
        <end position="412"/>
    </location>
</feature>
<feature type="repeat" description="1" evidence="16">
    <location>
        <begin position="123"/>
        <end position="126"/>
    </location>
</feature>
<feature type="repeat" description="2" evidence="16">
    <location>
        <begin position="127"/>
        <end position="130"/>
    </location>
</feature>
<feature type="repeat" description="3" evidence="16">
    <location>
        <begin position="131"/>
        <end position="134"/>
    </location>
</feature>
<feature type="repeat" description="4" evidence="16">
    <location>
        <begin position="135"/>
        <end position="138"/>
    </location>
</feature>
<feature type="repeat" description="5" evidence="16">
    <location>
        <begin position="139"/>
        <end position="142"/>
    </location>
</feature>
<feature type="repeat" description="6" evidence="16">
    <location>
        <begin position="143"/>
        <end position="146"/>
    </location>
</feature>
<feature type="repeat" description="7" evidence="16">
    <location>
        <begin position="147"/>
        <end position="150"/>
    </location>
</feature>
<feature type="repeat" description="8" evidence="16">
    <location>
        <begin position="151"/>
        <end position="154"/>
    </location>
</feature>
<feature type="repeat" description="9" evidence="16">
    <location>
        <begin position="155"/>
        <end position="158"/>
    </location>
</feature>
<feature type="repeat" description="10" evidence="16">
    <location>
        <begin position="159"/>
        <end position="162"/>
    </location>
</feature>
<feature type="repeat" description="11" evidence="16">
    <location>
        <begin position="163"/>
        <end position="166"/>
    </location>
</feature>
<feature type="repeat" description="12" evidence="16">
    <location>
        <begin position="167"/>
        <end position="170"/>
    </location>
</feature>
<feature type="repeat" description="13" evidence="16">
    <location>
        <begin position="171"/>
        <end position="174"/>
    </location>
</feature>
<feature type="repeat" description="14" evidence="16">
    <location>
        <begin position="175"/>
        <end position="178"/>
    </location>
</feature>
<feature type="repeat" description="15" evidence="16">
    <location>
        <begin position="179"/>
        <end position="182"/>
    </location>
</feature>
<feature type="repeat" description="16" evidence="16">
    <location>
        <begin position="183"/>
        <end position="186"/>
    </location>
</feature>
<feature type="repeat" description="17" evidence="16">
    <location>
        <begin position="187"/>
        <end position="190"/>
    </location>
</feature>
<feature type="repeat" description="18" evidence="16">
    <location>
        <begin position="191"/>
        <end position="194"/>
    </location>
</feature>
<feature type="repeat" description="19" evidence="16">
    <location>
        <begin position="195"/>
        <end position="198"/>
    </location>
</feature>
<feature type="repeat" description="20" evidence="16">
    <location>
        <begin position="199"/>
        <end position="202"/>
    </location>
</feature>
<feature type="repeat" description="21" evidence="16">
    <location>
        <begin position="203"/>
        <end position="206"/>
    </location>
</feature>
<feature type="repeat" description="22" evidence="16">
    <location>
        <begin position="207"/>
        <end position="210"/>
    </location>
</feature>
<feature type="repeat" description="23" evidence="16">
    <location>
        <begin position="211"/>
        <end position="214"/>
    </location>
</feature>
<feature type="repeat" description="24" evidence="16">
    <location>
        <begin position="215"/>
        <end position="218"/>
    </location>
</feature>
<feature type="repeat" description="25" evidence="16">
    <location>
        <begin position="219"/>
        <end position="222"/>
    </location>
</feature>
<feature type="repeat" description="26" evidence="16">
    <location>
        <begin position="223"/>
        <end position="226"/>
    </location>
</feature>
<feature type="repeat" description="27" evidence="16">
    <location>
        <begin position="227"/>
        <end position="230"/>
    </location>
</feature>
<feature type="repeat" description="28" evidence="16">
    <location>
        <begin position="231"/>
        <end position="234"/>
    </location>
</feature>
<feature type="repeat" description="29" evidence="16">
    <location>
        <begin position="235"/>
        <end position="238"/>
    </location>
</feature>
<feature type="repeat" description="30" evidence="16">
    <location>
        <begin position="239"/>
        <end position="242"/>
    </location>
</feature>
<feature type="repeat" description="31" evidence="16">
    <location>
        <begin position="243"/>
        <end position="246"/>
    </location>
</feature>
<feature type="repeat" description="32" evidence="16">
    <location>
        <begin position="247"/>
        <end position="250"/>
    </location>
</feature>
<feature type="repeat" description="33" evidence="16">
    <location>
        <begin position="251"/>
        <end position="254"/>
    </location>
</feature>
<feature type="repeat" description="34" evidence="16">
    <location>
        <begin position="255"/>
        <end position="258"/>
    </location>
</feature>
<feature type="repeat" description="35" evidence="16">
    <location>
        <begin position="259"/>
        <end position="262"/>
    </location>
</feature>
<feature type="repeat" description="36" evidence="16">
    <location>
        <begin position="263"/>
        <end position="266"/>
    </location>
</feature>
<feature type="repeat" description="37" evidence="16">
    <location>
        <begin position="267"/>
        <end position="270"/>
    </location>
</feature>
<feature type="repeat" description="38" evidence="16">
    <location>
        <begin position="271"/>
        <end position="274"/>
    </location>
</feature>
<feature type="repeat" description="39" evidence="16">
    <location>
        <begin position="275"/>
        <end position="278"/>
    </location>
</feature>
<feature type="repeat" description="40" evidence="16">
    <location>
        <begin position="279"/>
        <end position="282"/>
    </location>
</feature>
<feature type="repeat" description="41" evidence="16">
    <location>
        <begin position="283"/>
        <end position="286"/>
    </location>
</feature>
<feature type="domain" description="TSP type-1" evidence="5">
    <location>
        <begin position="337"/>
        <end position="390"/>
    </location>
</feature>
<feature type="region of interest" description="Disordered" evidence="6">
    <location>
        <begin position="69"/>
        <end position="328"/>
    </location>
</feature>
<feature type="region of interest" description="Required for the binding to heparan sulfate proteoglycans (HSPGs) on the surface of host hepatocytes" evidence="3">
    <location>
        <begin position="104"/>
        <end position="111"/>
    </location>
</feature>
<feature type="region of interest" description="Region I; contains the proteolytic cleavage site" evidence="2">
    <location>
        <begin position="112"/>
        <end position="116"/>
    </location>
</feature>
<feature type="region of interest" description="41 X 4 AA tandem repeats of P-N-[AV]-[ND]" evidence="16">
    <location>
        <begin position="123"/>
        <end position="286"/>
    </location>
</feature>
<feature type="compositionally biased region" description="Basic and acidic residues" evidence="6">
    <location>
        <begin position="85"/>
        <end position="105"/>
    </location>
</feature>
<feature type="compositionally biased region" description="Low complexity" evidence="6">
    <location>
        <begin position="120"/>
        <end position="288"/>
    </location>
</feature>
<feature type="compositionally biased region" description="Polar residues" evidence="6">
    <location>
        <begin position="289"/>
        <end position="304"/>
    </location>
</feature>
<feature type="compositionally biased region" description="Low complexity" evidence="6">
    <location>
        <begin position="310"/>
        <end position="324"/>
    </location>
</feature>
<feature type="lipid moiety-binding region" description="GPI-anchor amidated cysteine" evidence="4">
    <location>
        <position position="389"/>
    </location>
</feature>
<feature type="glycosylation site" description="O-linked (Fuc) threonine" evidence="1">
    <location>
        <position position="352"/>
    </location>
</feature>
<feature type="disulfide bond" evidence="3">
    <location>
        <begin position="349"/>
        <end position="384"/>
    </location>
</feature>
<feature type="disulfide bond" evidence="3">
    <location>
        <begin position="353"/>
        <end position="389"/>
    </location>
</feature>
<feature type="helix" evidence="28">
    <location>
        <begin position="103"/>
        <end position="110"/>
    </location>
</feature>
<feature type="helix" evidence="30">
    <location>
        <begin position="263"/>
        <end position="265"/>
    </location>
</feature>
<feature type="helix" evidence="29">
    <location>
        <begin position="271"/>
        <end position="273"/>
    </location>
</feature>
<feature type="turn" evidence="29">
    <location>
        <begin position="275"/>
        <end position="277"/>
    </location>
</feature>
<feature type="helix" evidence="30">
    <location>
        <begin position="279"/>
        <end position="281"/>
    </location>
</feature>
<proteinExistence type="evidence at protein level"/>
<name>CSP_PLAFA</name>
<reference key="1">
    <citation type="journal article" date="1984" name="Science">
        <title>Structure of the gene encoding the immunodominant surface antigen on the sporozoite of the human malaria parasite Plasmodium falciparum.</title>
        <authorList>
            <person name="Dame J.B."/>
            <person name="Williams J.L."/>
            <person name="McCutchan T.F."/>
            <person name="Weber J.L."/>
            <person name="Wirtz R.A."/>
            <person name="Hochmeyer W.T."/>
            <person name="Maloy W.L."/>
            <person name="Haynes J.D."/>
            <person name="Schneider I."/>
            <person name="Roberts D."/>
            <person name="Sanders G.S."/>
            <person name="Reddy E.P."/>
            <person name="Diggs C.L."/>
            <person name="Miller L.H."/>
        </authorList>
    </citation>
    <scope>NUCLEOTIDE SEQUENCE [GENOMIC DNA]</scope>
    <scope>DEVELOPMENTAL STAGE</scope>
    <scope>REPEATS</scope>
</reference>
<reference key="2">
    <citation type="journal article" date="2005" name="J. Exp. Med.">
        <title>The Plasmodium circumsporozoite protein is proteolytically processed during cell invasion.</title>
        <authorList>
            <person name="Coppi A."/>
            <person name="Pinzon-Ortiz C."/>
            <person name="Hutter C."/>
            <person name="Sinnis P."/>
        </authorList>
    </citation>
    <scope>DEVELOPMENTAL STAGE</scope>
    <scope>PROTEOLYTIC CLEAVAGE</scope>
</reference>
<reference key="3">
    <citation type="journal article" date="2015" name="Lancet">
        <title>Efficacy and safety of RTS,S/AS01 malaria vaccine with or without a booster dose in infants and children in Africa: final results of a phase 3, individually randomised, controlled trial.</title>
        <authorList>
            <consortium name="RTS,S Clinical Trials Partnership"/>
        </authorList>
    </citation>
    <scope>BIOTECHNOLOGY</scope>
</reference>
<reference evidence="17" key="4">
    <citation type="journal article" date="2008" name="Vaccine">
        <title>Structural and immunological analysis of circumsporozoite protein peptides: a further step in the identification of potential components of a minimal subunit-based, chemically synthesised antimalarial vaccine.</title>
        <authorList>
            <person name="Bermudez A."/>
            <person name="Vanegas M."/>
            <person name="Patarroyo M.E."/>
        </authorList>
    </citation>
    <scope>STRUCTURE BY NMR OF 67-75</scope>
</reference>
<reference evidence="18 19" key="5">
    <citation type="journal article" date="2017" name="Immunity">
        <title>Natural Parasite Exposure Induces Protective Human Anti-Malarial Antibodies.</title>
        <authorList>
            <person name="Triller G."/>
            <person name="Scally S.W."/>
            <person name="Costa G."/>
            <person name="Pissarev M."/>
            <person name="Kreschel C."/>
            <person name="Bosch A."/>
            <person name="Marois E."/>
            <person name="Sack B.K."/>
            <person name="Murugan R."/>
            <person name="Salman A.M."/>
            <person name="Janse C.J."/>
            <person name="Khan S.M."/>
            <person name="Kappe S.H.I."/>
            <person name="Adegnika A.A."/>
            <person name="Mordmueller B."/>
            <person name="Levashina E.A."/>
            <person name="Julien J.P."/>
            <person name="Wardemann H."/>
        </authorList>
    </citation>
    <scope>X-RAY CRYSTALLOGRAPHY (1.60 ANGSTROMS) OF 268-287 IN COMPLEX WITH ANTIBODY</scope>
    <scope>FUNCTION</scope>
    <scope>DEVELOPMENTAL STAGE</scope>
    <scope>BIOTECHNOLOGY</scope>
</reference>
<reference evidence="20 21 22 23 24 25 26 27" key="6">
    <citation type="journal article" date="2018" name="Nat. Med.">
        <title>A human monoclonal antibody prevents malaria infection by targeting a new site of vulnerability on the parasite.</title>
        <authorList>
            <person name="Kisalu N.K."/>
            <person name="Idris A.H."/>
            <person name="Weidle C."/>
            <person name="Flores-Garcia Y."/>
            <person name="Flynn B.J."/>
            <person name="Sack B.K."/>
            <person name="Murphy S."/>
            <person name="Schoen A."/>
            <person name="Freire E."/>
            <person name="Francica J.R."/>
            <person name="Miller A.B."/>
            <person name="Gregory J."/>
            <person name="March S."/>
            <person name="Liao H.X."/>
            <person name="Haynes B.F."/>
            <person name="Wiehe K."/>
            <person name="Trama A.M."/>
            <person name="Saunders K.O."/>
            <person name="Gladden M.A."/>
            <person name="Monroe A."/>
            <person name="Bonsignori M."/>
            <person name="Kanekiyo M."/>
            <person name="Wheatley A.K."/>
            <person name="McDermott A.B."/>
            <person name="Farney S.K."/>
            <person name="Chuang G.Y."/>
            <person name="Zhang B."/>
            <person name="Kc N."/>
            <person name="Chakravarty S."/>
            <person name="Kwong P.D."/>
            <person name="Sinnis P."/>
            <person name="Bhatia S.N."/>
            <person name="Kappe S.H.I."/>
            <person name="Sim B.K.L."/>
            <person name="Hoffman S.L."/>
            <person name="Zavala F."/>
            <person name="Pancera M."/>
            <person name="Seder R.A."/>
        </authorList>
    </citation>
    <scope>X-RAY CRYSTALLOGRAPHY (1.77 ANGSTROMS) OF 120-134 IN COMPLEX WITH ANTIBODY CIS4</scope>
    <scope>FUNCTION</scope>
    <scope>DEVELOPMENTAL STAGE</scope>
    <scope>PROTEOLYTIC CLEAVAGE</scope>
    <scope>BIOTECHNOLOGY</scope>
</reference>
<reference key="7">
    <citation type="journal article" date="2019" name="Nat. Med.">
        <authorList>
            <person name="Kisalu N.K."/>
            <person name="Idris A.H."/>
            <person name="Weidle C."/>
            <person name="Flores-Garcia Y."/>
            <person name="Flynn B.J."/>
            <person name="Sack B.K."/>
            <person name="Murphy S."/>
            <person name="Schoen A."/>
            <person name="Freire E."/>
            <person name="Francica J.R."/>
            <person name="Miller A.B."/>
            <person name="Gregory J."/>
            <person name="March S."/>
            <person name="Liao H.X."/>
            <person name="Haynes B.F."/>
            <person name="Wiehe K."/>
            <person name="Trama A.M."/>
            <person name="Saunders K.O."/>
            <person name="Gladden M.A."/>
            <person name="Monroe A."/>
            <person name="Bonsignori M."/>
            <person name="Kanekiyo M."/>
            <person name="Wheatley A.K."/>
            <person name="McDermott A.B."/>
            <person name="Farney S.K."/>
            <person name="Chuang G.Y."/>
            <person name="Zhang B."/>
            <person name="Kc N."/>
            <person name="Chakravarty S."/>
            <person name="Kwong P.D."/>
            <person name="Sinnis P."/>
            <person name="Bhatia S.N."/>
            <person name="Kappe S.H.I."/>
            <person name="Sim B.K.L."/>
            <person name="Hoffman S.L."/>
            <person name="Zavala F."/>
            <person name="Pancera M."/>
            <person name="Seder R.A."/>
        </authorList>
    </citation>
    <scope>ERRATUM OF PUBMED:29554083</scope>
</reference>
<protein>
    <recommendedName>
        <fullName evidence="14">Circumsporozoite protein</fullName>
        <shortName evidence="14">CS</shortName>
        <shortName evidence="13">PfCSP</shortName>
    </recommendedName>
    <component>
        <recommendedName>
            <fullName evidence="15">Circumsporozoite protein C-terminus</fullName>
        </recommendedName>
    </component>
</protein>
<sequence>MMRKLAILSVSSFLFVEALFQEYQCYGSSSNTRVLNELNYDNAGTNLYNELEMNYYGKQENWYSLKKNSRSLGENDDGNNNNGDNGREGKDEDKRDGNNEDNEKLRKPKHKKLKQPGDGNPDPNANPNVDPNANPNVDPNANPNVDPNANPNANPNANPNANPNANPNANPNANPNANPNANPNANPNANPNANPNANPNANPNANPNVDPNANPNANPNANPNANPNANPNANPNANPNANPNANPNANPNANPNANPNANPNANPNANPNANPNANPNANPNANPNKNNQGNGQGHNMPNDPNRNVDENANANNAVKNNNNEEPSDKHIEQYLKKIKNSISTEWSPCSVTCGNGIQVRIKPGSANKPKDELDYENDIEKKICKMEKCSSVFNVVNSSIGLIMVLSFLFLN</sequence>